<dbReference type="EC" id="7.1.1.-" evidence="1"/>
<dbReference type="EMBL" id="CP001043">
    <property type="protein sequence ID" value="ACC71185.1"/>
    <property type="molecule type" value="Genomic_DNA"/>
</dbReference>
<dbReference type="RefSeq" id="WP_012401394.1">
    <property type="nucleotide sequence ID" value="NC_010622.1"/>
</dbReference>
<dbReference type="SMR" id="B2JDM5"/>
<dbReference type="STRING" id="391038.Bphy_2006"/>
<dbReference type="KEGG" id="bph:Bphy_2006"/>
<dbReference type="eggNOG" id="COG0649">
    <property type="taxonomic scope" value="Bacteria"/>
</dbReference>
<dbReference type="HOGENOM" id="CLU_015134_1_1_4"/>
<dbReference type="OrthoDB" id="9801496at2"/>
<dbReference type="Proteomes" id="UP000001192">
    <property type="component" value="Chromosome 1"/>
</dbReference>
<dbReference type="GO" id="GO:0005886">
    <property type="term" value="C:plasma membrane"/>
    <property type="evidence" value="ECO:0007669"/>
    <property type="project" value="UniProtKB-SubCell"/>
</dbReference>
<dbReference type="GO" id="GO:0051287">
    <property type="term" value="F:NAD binding"/>
    <property type="evidence" value="ECO:0007669"/>
    <property type="project" value="InterPro"/>
</dbReference>
<dbReference type="GO" id="GO:0050136">
    <property type="term" value="F:NADH:ubiquinone reductase (non-electrogenic) activity"/>
    <property type="evidence" value="ECO:0007669"/>
    <property type="project" value="UniProtKB-UniRule"/>
</dbReference>
<dbReference type="GO" id="GO:0048038">
    <property type="term" value="F:quinone binding"/>
    <property type="evidence" value="ECO:0007669"/>
    <property type="project" value="UniProtKB-KW"/>
</dbReference>
<dbReference type="FunFam" id="1.10.645.10:FF:000005">
    <property type="entry name" value="NADH-quinone oxidoreductase subunit D"/>
    <property type="match status" value="1"/>
</dbReference>
<dbReference type="Gene3D" id="1.10.645.10">
    <property type="entry name" value="Cytochrome-c3 Hydrogenase, chain B"/>
    <property type="match status" value="1"/>
</dbReference>
<dbReference type="HAMAP" id="MF_01358">
    <property type="entry name" value="NDH1_NuoD"/>
    <property type="match status" value="1"/>
</dbReference>
<dbReference type="InterPro" id="IPR001135">
    <property type="entry name" value="NADH_Q_OxRdtase_suD"/>
</dbReference>
<dbReference type="InterPro" id="IPR014029">
    <property type="entry name" value="NADH_UbQ_OxRdtase_49kDa_CS"/>
</dbReference>
<dbReference type="InterPro" id="IPR022885">
    <property type="entry name" value="NDH1_su_D/H"/>
</dbReference>
<dbReference type="InterPro" id="IPR029014">
    <property type="entry name" value="NiFe-Hase_large"/>
</dbReference>
<dbReference type="NCBIfam" id="TIGR01962">
    <property type="entry name" value="NuoD"/>
    <property type="match status" value="1"/>
</dbReference>
<dbReference type="NCBIfam" id="NF004739">
    <property type="entry name" value="PRK06075.1"/>
    <property type="match status" value="1"/>
</dbReference>
<dbReference type="PANTHER" id="PTHR11993:SF10">
    <property type="entry name" value="NADH DEHYDROGENASE [UBIQUINONE] IRON-SULFUR PROTEIN 2, MITOCHONDRIAL"/>
    <property type="match status" value="1"/>
</dbReference>
<dbReference type="PANTHER" id="PTHR11993">
    <property type="entry name" value="NADH-UBIQUINONE OXIDOREDUCTASE 49 KDA SUBUNIT"/>
    <property type="match status" value="1"/>
</dbReference>
<dbReference type="Pfam" id="PF00346">
    <property type="entry name" value="Complex1_49kDa"/>
    <property type="match status" value="1"/>
</dbReference>
<dbReference type="SUPFAM" id="SSF56762">
    <property type="entry name" value="HydB/Nqo4-like"/>
    <property type="match status" value="1"/>
</dbReference>
<dbReference type="PROSITE" id="PS00535">
    <property type="entry name" value="COMPLEX1_49K"/>
    <property type="match status" value="1"/>
</dbReference>
<protein>
    <recommendedName>
        <fullName evidence="1">NADH-quinone oxidoreductase subunit D</fullName>
        <ecNumber evidence="1">7.1.1.-</ecNumber>
    </recommendedName>
    <alternativeName>
        <fullName evidence="1">NADH dehydrogenase I subunit D</fullName>
    </alternativeName>
    <alternativeName>
        <fullName evidence="1">NDH-1 subunit D</fullName>
    </alternativeName>
</protein>
<evidence type="ECO:0000255" key="1">
    <source>
        <dbReference type="HAMAP-Rule" id="MF_01358"/>
    </source>
</evidence>
<feature type="chain" id="PRO_0000371833" description="NADH-quinone oxidoreductase subunit D">
    <location>
        <begin position="1"/>
        <end position="417"/>
    </location>
</feature>
<comment type="function">
    <text evidence="1">NDH-1 shuttles electrons from NADH, via FMN and iron-sulfur (Fe-S) centers, to quinones in the respiratory chain. The immediate electron acceptor for the enzyme in this species is believed to be ubiquinone. Couples the redox reaction to proton translocation (for every two electrons transferred, four hydrogen ions are translocated across the cytoplasmic membrane), and thus conserves the redox energy in a proton gradient.</text>
</comment>
<comment type="catalytic activity">
    <reaction evidence="1">
        <text>a quinone + NADH + 5 H(+)(in) = a quinol + NAD(+) + 4 H(+)(out)</text>
        <dbReference type="Rhea" id="RHEA:57888"/>
        <dbReference type="ChEBI" id="CHEBI:15378"/>
        <dbReference type="ChEBI" id="CHEBI:24646"/>
        <dbReference type="ChEBI" id="CHEBI:57540"/>
        <dbReference type="ChEBI" id="CHEBI:57945"/>
        <dbReference type="ChEBI" id="CHEBI:132124"/>
    </reaction>
</comment>
<comment type="subunit">
    <text evidence="1">NDH-1 is composed of 14 different subunits. Subunits NuoB, C, D, E, F, and G constitute the peripheral sector of the complex.</text>
</comment>
<comment type="subcellular location">
    <subcellularLocation>
        <location evidence="1">Cell inner membrane</location>
        <topology evidence="1">Peripheral membrane protein</topology>
        <orientation evidence="1">Cytoplasmic side</orientation>
    </subcellularLocation>
</comment>
<comment type="similarity">
    <text evidence="1">Belongs to the complex I 49 kDa subunit family.</text>
</comment>
<proteinExistence type="inferred from homology"/>
<reference key="1">
    <citation type="journal article" date="2014" name="Stand. Genomic Sci.">
        <title>Complete genome sequence of Burkholderia phymatum STM815(T), a broad host range and efficient nitrogen-fixing symbiont of Mimosa species.</title>
        <authorList>
            <person name="Moulin L."/>
            <person name="Klonowska A."/>
            <person name="Caroline B."/>
            <person name="Booth K."/>
            <person name="Vriezen J.A."/>
            <person name="Melkonian R."/>
            <person name="James E.K."/>
            <person name="Young J.P."/>
            <person name="Bena G."/>
            <person name="Hauser L."/>
            <person name="Land M."/>
            <person name="Kyrpides N."/>
            <person name="Bruce D."/>
            <person name="Chain P."/>
            <person name="Copeland A."/>
            <person name="Pitluck S."/>
            <person name="Woyke T."/>
            <person name="Lizotte-Waniewski M."/>
            <person name="Bristow J."/>
            <person name="Riley M."/>
        </authorList>
    </citation>
    <scope>NUCLEOTIDE SEQUENCE [LARGE SCALE GENOMIC DNA]</scope>
    <source>
        <strain>DSM 17167 / CIP 108236 / LMG 21445 / STM815</strain>
    </source>
</reference>
<keyword id="KW-0997">Cell inner membrane</keyword>
<keyword id="KW-1003">Cell membrane</keyword>
<keyword id="KW-0472">Membrane</keyword>
<keyword id="KW-0520">NAD</keyword>
<keyword id="KW-0874">Quinone</keyword>
<keyword id="KW-1185">Reference proteome</keyword>
<keyword id="KW-1278">Translocase</keyword>
<keyword id="KW-0813">Transport</keyword>
<keyword id="KW-0830">Ubiquinone</keyword>
<sequence>MAEIKNYTLNFGPQHPAAHGVLRLVLELDGEVIQRADPHIGLLHRATEKLAESKTFIQSVPYMDRLDYVSMMVNEHGYVLAIEKLLGIDVPIRAKYIRVLFDEVTRVLNHLMWIGAHALDVGAMAVFLYAFREREDLMDVYEAVSGARMHAAYYRPGGVYRDLPDAMPQYKASKIRNTKALSKLNENRQGSLLDFIEDFFNRFPKCVDEYETLLTDNRIWKQRLVGIGVVSPERALQMGLTGAMLRGSGIEWDLRKKQPYEVYDQMDFDIPVGVNGDCYDRYLVRVEEMRQSTRIAKQCIEWLRKNPGPVMTDNHKVAPPSRVGMKSNMEELIHHFKLFTEGFHVPEGEAYAAVEHPKGEFGIYLVSDGANKPYRLKIRAPGYAHLSALDEMARGHMIADAVTIIGTQDIVFGEVDR</sequence>
<accession>B2JDM5</accession>
<gene>
    <name evidence="1" type="primary">nuoD</name>
    <name type="ordered locus">Bphy_2006</name>
</gene>
<organism>
    <name type="scientific">Paraburkholderia phymatum (strain DSM 17167 / CIP 108236 / LMG 21445 / STM815)</name>
    <name type="common">Burkholderia phymatum</name>
    <dbReference type="NCBI Taxonomy" id="391038"/>
    <lineage>
        <taxon>Bacteria</taxon>
        <taxon>Pseudomonadati</taxon>
        <taxon>Pseudomonadota</taxon>
        <taxon>Betaproteobacteria</taxon>
        <taxon>Burkholderiales</taxon>
        <taxon>Burkholderiaceae</taxon>
        <taxon>Paraburkholderia</taxon>
    </lineage>
</organism>
<name>NUOD_PARP8</name>